<keyword id="KW-0067">ATP-binding</keyword>
<keyword id="KW-0238">DNA-binding</keyword>
<keyword id="KW-0413">Isomerase</keyword>
<keyword id="KW-0547">Nucleotide-binding</keyword>
<keyword id="KW-0799">Topoisomerase</keyword>
<reference key="1">
    <citation type="journal article" date="2009" name="Proc. Natl. Acad. Sci. U.S.A.">
        <title>Biogeography of the Sulfolobus islandicus pan-genome.</title>
        <authorList>
            <person name="Reno M.L."/>
            <person name="Held N.L."/>
            <person name="Fields C.J."/>
            <person name="Burke P.V."/>
            <person name="Whitaker R.J."/>
        </authorList>
    </citation>
    <scope>NUCLEOTIDE SEQUENCE [LARGE SCALE GENOMIC DNA]</scope>
    <source>
        <strain>Y.G.57.14 / Yellowstone #1</strain>
    </source>
</reference>
<sequence length="530" mass="60563">MSAKEKFTSLSPAEFFKRNPELAGFPNPARALYQTVRELIENSLDATDVHGILPNIKITIDLIDEARQIYKVNVVDNGIGIPPQEVPNAFGRVLYSSKYVNRQTRGMYGLGVKAAVLYSQMHQDKPIEIETSPANSKRIYTFKLKIDINKNEPIIVERGSVENTRGFHGTSVAISIPGDWPKAKSRIYEYIKRTYIITPYAEFIFKDPEGNVTYYPRLTNKIPKPPQEVKPHPYGVDREEIKILINNLKRDYTIKEFLVNEFQSIGDTTADKILELAGLKPNKKVKNLTEEEITRLVETFKKYEDFRSPSADSLSVIGEDLIELGLKKIFNPDFAASITRKPKAYQGHPFIVEAGVAFGGSIPVGEEPIVLRYANKIPLIYDEKSDVIWKVVEELDWKRYGIESDQYQMVVMVHLCSTKIPYKSAGKESIAEVEDIEKEIKNALMEVARKLKQYLSEKRKEQEAKKKLLAYLKYIPEVSRSLATFLASGNKELVSKYQNEISEGLFKLISKKLDLINIEEYRKVYRVDSE</sequence>
<feature type="chain" id="PRO_1000205147" description="Type 2 DNA topoisomerase 6 subunit B">
    <location>
        <begin position="1"/>
        <end position="530"/>
    </location>
</feature>
<feature type="binding site" evidence="1">
    <location>
        <position position="42"/>
    </location>
    <ligand>
        <name>ATP</name>
        <dbReference type="ChEBI" id="CHEBI:30616"/>
    </ligand>
</feature>
<feature type="binding site" evidence="1">
    <location>
        <position position="76"/>
    </location>
    <ligand>
        <name>ATP</name>
        <dbReference type="ChEBI" id="CHEBI:30616"/>
    </ligand>
</feature>
<feature type="binding site" evidence="1">
    <location>
        <begin position="97"/>
        <end position="98"/>
    </location>
    <ligand>
        <name>ATP</name>
        <dbReference type="ChEBI" id="CHEBI:30616"/>
    </ligand>
</feature>
<feature type="binding site" evidence="1">
    <location>
        <begin position="106"/>
        <end position="113"/>
    </location>
    <ligand>
        <name>ATP</name>
        <dbReference type="ChEBI" id="CHEBI:30616"/>
    </ligand>
</feature>
<feature type="binding site" evidence="1">
    <location>
        <position position="427"/>
    </location>
    <ligand>
        <name>ATP</name>
        <dbReference type="ChEBI" id="CHEBI:30616"/>
    </ligand>
</feature>
<comment type="function">
    <text evidence="1">Relaxes both positive and negative superturns and exhibits a strong decatenase activity.</text>
</comment>
<comment type="catalytic activity">
    <reaction evidence="1">
        <text>ATP-dependent breakage, passage and rejoining of double-stranded DNA.</text>
        <dbReference type="EC" id="5.6.2.2"/>
    </reaction>
</comment>
<comment type="subunit">
    <text evidence="1">Homodimer. Heterotetramer of two Top6A and two Top6B chains.</text>
</comment>
<comment type="similarity">
    <text evidence="1">Belongs to the TOP6B family.</text>
</comment>
<accession>C3NDW7</accession>
<name>TOP6B_SACI7</name>
<dbReference type="EC" id="5.6.2.2" evidence="1"/>
<dbReference type="EMBL" id="CP001403">
    <property type="protein sequence ID" value="ACP45506.1"/>
    <property type="molecule type" value="Genomic_DNA"/>
</dbReference>
<dbReference type="RefSeq" id="WP_012711263.1">
    <property type="nucleotide sequence ID" value="NC_012622.1"/>
</dbReference>
<dbReference type="SMR" id="C3NDW7"/>
<dbReference type="KEGG" id="siy:YG5714_1240"/>
<dbReference type="HOGENOM" id="CLU_006403_0_0_2"/>
<dbReference type="Proteomes" id="UP000002308">
    <property type="component" value="Chromosome"/>
</dbReference>
<dbReference type="GO" id="GO:0005524">
    <property type="term" value="F:ATP binding"/>
    <property type="evidence" value="ECO:0007669"/>
    <property type="project" value="UniProtKB-UniRule"/>
</dbReference>
<dbReference type="GO" id="GO:0003677">
    <property type="term" value="F:DNA binding"/>
    <property type="evidence" value="ECO:0007669"/>
    <property type="project" value="UniProtKB-UniRule"/>
</dbReference>
<dbReference type="GO" id="GO:0003918">
    <property type="term" value="F:DNA topoisomerase type II (double strand cut, ATP-hydrolyzing) activity"/>
    <property type="evidence" value="ECO:0007669"/>
    <property type="project" value="UniProtKB-UniRule"/>
</dbReference>
<dbReference type="GO" id="GO:0006265">
    <property type="term" value="P:DNA topological change"/>
    <property type="evidence" value="ECO:0007669"/>
    <property type="project" value="UniProtKB-UniRule"/>
</dbReference>
<dbReference type="CDD" id="cd16933">
    <property type="entry name" value="HATPase_TopVIB-like"/>
    <property type="match status" value="1"/>
</dbReference>
<dbReference type="CDD" id="cd00823">
    <property type="entry name" value="TopoIIB_Trans"/>
    <property type="match status" value="1"/>
</dbReference>
<dbReference type="FunFam" id="1.10.8.50:FF:000014">
    <property type="entry name" value="Type 2 DNA topoisomerase 6 subunit B"/>
    <property type="match status" value="1"/>
</dbReference>
<dbReference type="FunFam" id="3.30.230.10:FF:000091">
    <property type="entry name" value="Type 2 DNA topoisomerase 6 subunit B"/>
    <property type="match status" value="1"/>
</dbReference>
<dbReference type="FunFam" id="3.30.565.10:FF:000062">
    <property type="entry name" value="Type 2 DNA topoisomerase 6 subunit B"/>
    <property type="match status" value="1"/>
</dbReference>
<dbReference type="Gene3D" id="1.10.8.50">
    <property type="match status" value="1"/>
</dbReference>
<dbReference type="Gene3D" id="3.30.230.10">
    <property type="match status" value="1"/>
</dbReference>
<dbReference type="Gene3D" id="3.30.565.10">
    <property type="entry name" value="Histidine kinase-like ATPase, C-terminal domain"/>
    <property type="match status" value="1"/>
</dbReference>
<dbReference type="HAMAP" id="MF_00322">
    <property type="entry name" value="Top6B"/>
    <property type="match status" value="1"/>
</dbReference>
<dbReference type="InterPro" id="IPR036890">
    <property type="entry name" value="HATPase_C_sf"/>
</dbReference>
<dbReference type="InterPro" id="IPR020568">
    <property type="entry name" value="Ribosomal_Su5_D2-typ_SF"/>
</dbReference>
<dbReference type="InterPro" id="IPR010979">
    <property type="entry name" value="Ribosomal_uS13-like_H2TH"/>
</dbReference>
<dbReference type="InterPro" id="IPR014721">
    <property type="entry name" value="Ribsml_uS5_D2-typ_fold_subgr"/>
</dbReference>
<dbReference type="InterPro" id="IPR005734">
    <property type="entry name" value="TopoVI_B"/>
</dbReference>
<dbReference type="InterPro" id="IPR015320">
    <property type="entry name" value="TopoVI_B_transducer"/>
</dbReference>
<dbReference type="NCBIfam" id="NF003218">
    <property type="entry name" value="PRK04184.1"/>
    <property type="match status" value="1"/>
</dbReference>
<dbReference type="NCBIfam" id="TIGR01052">
    <property type="entry name" value="top6b"/>
    <property type="match status" value="1"/>
</dbReference>
<dbReference type="PANTHER" id="PTHR48444">
    <property type="entry name" value="DNA TOPOISOMERASE 6 SUBUNIT B"/>
    <property type="match status" value="1"/>
</dbReference>
<dbReference type="PANTHER" id="PTHR48444:SF1">
    <property type="entry name" value="DNA TOPOISOMERASE 6 SUBUNIT B"/>
    <property type="match status" value="1"/>
</dbReference>
<dbReference type="Pfam" id="PF02518">
    <property type="entry name" value="HATPase_c"/>
    <property type="match status" value="1"/>
</dbReference>
<dbReference type="Pfam" id="PF05833">
    <property type="entry name" value="NFACT_N"/>
    <property type="match status" value="1"/>
</dbReference>
<dbReference type="Pfam" id="PF09239">
    <property type="entry name" value="Topo-VIb_trans"/>
    <property type="match status" value="1"/>
</dbReference>
<dbReference type="PIRSF" id="PIRSF006553">
    <property type="entry name" value="TopoVI_B"/>
    <property type="match status" value="1"/>
</dbReference>
<dbReference type="SMART" id="SM00387">
    <property type="entry name" value="HATPase_c"/>
    <property type="match status" value="1"/>
</dbReference>
<dbReference type="SUPFAM" id="SSF55874">
    <property type="entry name" value="ATPase domain of HSP90 chaperone/DNA topoisomerase II/histidine kinase"/>
    <property type="match status" value="1"/>
</dbReference>
<dbReference type="SUPFAM" id="SSF54211">
    <property type="entry name" value="Ribosomal protein S5 domain 2-like"/>
    <property type="match status" value="1"/>
</dbReference>
<dbReference type="SUPFAM" id="SSF46946">
    <property type="entry name" value="S13-like H2TH domain"/>
    <property type="match status" value="1"/>
</dbReference>
<proteinExistence type="inferred from homology"/>
<evidence type="ECO:0000255" key="1">
    <source>
        <dbReference type="HAMAP-Rule" id="MF_00322"/>
    </source>
</evidence>
<gene>
    <name evidence="1" type="primary">top6B</name>
    <name type="ordered locus">YG5714_1240</name>
</gene>
<organism>
    <name type="scientific">Saccharolobus islandicus (strain Y.G.57.14 / Yellowstone #1)</name>
    <name type="common">Sulfolobus islandicus</name>
    <dbReference type="NCBI Taxonomy" id="439386"/>
    <lineage>
        <taxon>Archaea</taxon>
        <taxon>Thermoproteota</taxon>
        <taxon>Thermoprotei</taxon>
        <taxon>Sulfolobales</taxon>
        <taxon>Sulfolobaceae</taxon>
        <taxon>Saccharolobus</taxon>
    </lineage>
</organism>
<protein>
    <recommendedName>
        <fullName evidence="1">Type 2 DNA topoisomerase 6 subunit B</fullName>
        <ecNumber evidence="1">5.6.2.2</ecNumber>
    </recommendedName>
    <alternativeName>
        <fullName evidence="1">Type II DNA topoisomerase VI subunit B</fullName>
        <shortName evidence="1">TopoVI-B</shortName>
    </alternativeName>
</protein>